<reference key="1">
    <citation type="submission" date="2005-08" db="EMBL/GenBank/DDBJ databases">
        <title>Complete sequence of Pelodictyon luteolum DSM 273.</title>
        <authorList>
            <consortium name="US DOE Joint Genome Institute"/>
            <person name="Copeland A."/>
            <person name="Lucas S."/>
            <person name="Lapidus A."/>
            <person name="Barry K."/>
            <person name="Detter J.C."/>
            <person name="Glavina T."/>
            <person name="Hammon N."/>
            <person name="Israni S."/>
            <person name="Pitluck S."/>
            <person name="Bryant D."/>
            <person name="Schmutz J."/>
            <person name="Larimer F."/>
            <person name="Land M."/>
            <person name="Kyrpides N."/>
            <person name="Ivanova N."/>
            <person name="Richardson P."/>
        </authorList>
    </citation>
    <scope>NUCLEOTIDE SEQUENCE [LARGE SCALE GENOMIC DNA]</scope>
    <source>
        <strain>DSM 273 / BCRC 81028 / 2530</strain>
    </source>
</reference>
<accession>Q3B6H6</accession>
<name>OBG_CHLL3</name>
<organism>
    <name type="scientific">Chlorobium luteolum (strain DSM 273 / BCRC 81028 / 2530)</name>
    <name type="common">Pelodictyon luteolum</name>
    <dbReference type="NCBI Taxonomy" id="319225"/>
    <lineage>
        <taxon>Bacteria</taxon>
        <taxon>Pseudomonadati</taxon>
        <taxon>Chlorobiota</taxon>
        <taxon>Chlorobiia</taxon>
        <taxon>Chlorobiales</taxon>
        <taxon>Chlorobiaceae</taxon>
        <taxon>Chlorobium/Pelodictyon group</taxon>
        <taxon>Pelodictyon</taxon>
    </lineage>
</organism>
<feature type="chain" id="PRO_0000386115" description="GTPase Obg">
    <location>
        <begin position="1"/>
        <end position="343"/>
    </location>
</feature>
<feature type="domain" description="Obg" evidence="2">
    <location>
        <begin position="1"/>
        <end position="159"/>
    </location>
</feature>
<feature type="domain" description="OBG-type G" evidence="1">
    <location>
        <begin position="160"/>
        <end position="323"/>
    </location>
</feature>
<feature type="region of interest" description="Disordered" evidence="3">
    <location>
        <begin position="121"/>
        <end position="144"/>
    </location>
</feature>
<feature type="region of interest" description="Disordered" evidence="3">
    <location>
        <begin position="322"/>
        <end position="343"/>
    </location>
</feature>
<feature type="compositionally biased region" description="Polar residues" evidence="3">
    <location>
        <begin position="129"/>
        <end position="138"/>
    </location>
</feature>
<feature type="compositionally biased region" description="Acidic residues" evidence="3">
    <location>
        <begin position="331"/>
        <end position="343"/>
    </location>
</feature>
<feature type="binding site" evidence="1">
    <location>
        <begin position="166"/>
        <end position="173"/>
    </location>
    <ligand>
        <name>GTP</name>
        <dbReference type="ChEBI" id="CHEBI:37565"/>
    </ligand>
</feature>
<feature type="binding site" evidence="1">
    <location>
        <position position="173"/>
    </location>
    <ligand>
        <name>Mg(2+)</name>
        <dbReference type="ChEBI" id="CHEBI:18420"/>
    </ligand>
</feature>
<feature type="binding site" evidence="1">
    <location>
        <begin position="191"/>
        <end position="195"/>
    </location>
    <ligand>
        <name>GTP</name>
        <dbReference type="ChEBI" id="CHEBI:37565"/>
    </ligand>
</feature>
<feature type="binding site" evidence="1">
    <location>
        <position position="193"/>
    </location>
    <ligand>
        <name>Mg(2+)</name>
        <dbReference type="ChEBI" id="CHEBI:18420"/>
    </ligand>
</feature>
<feature type="binding site" evidence="1">
    <location>
        <begin position="213"/>
        <end position="216"/>
    </location>
    <ligand>
        <name>GTP</name>
        <dbReference type="ChEBI" id="CHEBI:37565"/>
    </ligand>
</feature>
<feature type="binding site" evidence="1">
    <location>
        <begin position="280"/>
        <end position="283"/>
    </location>
    <ligand>
        <name>GTP</name>
        <dbReference type="ChEBI" id="CHEBI:37565"/>
    </ligand>
</feature>
<feature type="binding site" evidence="1">
    <location>
        <begin position="304"/>
        <end position="306"/>
    </location>
    <ligand>
        <name>GTP</name>
        <dbReference type="ChEBI" id="CHEBI:37565"/>
    </ligand>
</feature>
<protein>
    <recommendedName>
        <fullName evidence="1">GTPase Obg</fullName>
        <ecNumber evidence="1">3.6.5.-</ecNumber>
    </recommendedName>
    <alternativeName>
        <fullName evidence="1">GTP-binding protein Obg</fullName>
    </alternativeName>
</protein>
<proteinExistence type="inferred from homology"/>
<keyword id="KW-0963">Cytoplasm</keyword>
<keyword id="KW-0342">GTP-binding</keyword>
<keyword id="KW-0378">Hydrolase</keyword>
<keyword id="KW-0460">Magnesium</keyword>
<keyword id="KW-0479">Metal-binding</keyword>
<keyword id="KW-0547">Nucleotide-binding</keyword>
<keyword id="KW-1185">Reference proteome</keyword>
<dbReference type="EC" id="3.6.5.-" evidence="1"/>
<dbReference type="EMBL" id="CP000096">
    <property type="protein sequence ID" value="ABB23055.1"/>
    <property type="molecule type" value="Genomic_DNA"/>
</dbReference>
<dbReference type="RefSeq" id="WP_011356931.1">
    <property type="nucleotide sequence ID" value="NC_007512.1"/>
</dbReference>
<dbReference type="SMR" id="Q3B6H6"/>
<dbReference type="STRING" id="319225.Plut_0165"/>
<dbReference type="KEGG" id="plt:Plut_0165"/>
<dbReference type="eggNOG" id="COG0536">
    <property type="taxonomic scope" value="Bacteria"/>
</dbReference>
<dbReference type="HOGENOM" id="CLU_011747_2_0_10"/>
<dbReference type="OrthoDB" id="9807318at2"/>
<dbReference type="Proteomes" id="UP000002709">
    <property type="component" value="Chromosome"/>
</dbReference>
<dbReference type="GO" id="GO:0005737">
    <property type="term" value="C:cytoplasm"/>
    <property type="evidence" value="ECO:0007669"/>
    <property type="project" value="UniProtKB-SubCell"/>
</dbReference>
<dbReference type="GO" id="GO:0005525">
    <property type="term" value="F:GTP binding"/>
    <property type="evidence" value="ECO:0007669"/>
    <property type="project" value="UniProtKB-UniRule"/>
</dbReference>
<dbReference type="GO" id="GO:0003924">
    <property type="term" value="F:GTPase activity"/>
    <property type="evidence" value="ECO:0007669"/>
    <property type="project" value="UniProtKB-UniRule"/>
</dbReference>
<dbReference type="GO" id="GO:0000287">
    <property type="term" value="F:magnesium ion binding"/>
    <property type="evidence" value="ECO:0007669"/>
    <property type="project" value="InterPro"/>
</dbReference>
<dbReference type="GO" id="GO:0042254">
    <property type="term" value="P:ribosome biogenesis"/>
    <property type="evidence" value="ECO:0007669"/>
    <property type="project" value="UniProtKB-UniRule"/>
</dbReference>
<dbReference type="CDD" id="cd01898">
    <property type="entry name" value="Obg"/>
    <property type="match status" value="1"/>
</dbReference>
<dbReference type="FunFam" id="2.70.210.12:FF:000001">
    <property type="entry name" value="GTPase Obg"/>
    <property type="match status" value="1"/>
</dbReference>
<dbReference type="Gene3D" id="2.70.210.12">
    <property type="entry name" value="GTP1/OBG domain"/>
    <property type="match status" value="1"/>
</dbReference>
<dbReference type="Gene3D" id="3.40.50.300">
    <property type="entry name" value="P-loop containing nucleotide triphosphate hydrolases"/>
    <property type="match status" value="1"/>
</dbReference>
<dbReference type="HAMAP" id="MF_01454">
    <property type="entry name" value="GTPase_Obg"/>
    <property type="match status" value="1"/>
</dbReference>
<dbReference type="InterPro" id="IPR031167">
    <property type="entry name" value="G_OBG"/>
</dbReference>
<dbReference type="InterPro" id="IPR006073">
    <property type="entry name" value="GTP-bd"/>
</dbReference>
<dbReference type="InterPro" id="IPR014100">
    <property type="entry name" value="GTP-bd_Obg/CgtA"/>
</dbReference>
<dbReference type="InterPro" id="IPR006074">
    <property type="entry name" value="GTP1-OBG_CS"/>
</dbReference>
<dbReference type="InterPro" id="IPR006169">
    <property type="entry name" value="GTP1_OBG_dom"/>
</dbReference>
<dbReference type="InterPro" id="IPR036726">
    <property type="entry name" value="GTP1_OBG_dom_sf"/>
</dbReference>
<dbReference type="InterPro" id="IPR045086">
    <property type="entry name" value="OBG_GTPase"/>
</dbReference>
<dbReference type="InterPro" id="IPR027417">
    <property type="entry name" value="P-loop_NTPase"/>
</dbReference>
<dbReference type="NCBIfam" id="TIGR02729">
    <property type="entry name" value="Obg_CgtA"/>
    <property type="match status" value="1"/>
</dbReference>
<dbReference type="NCBIfam" id="NF008955">
    <property type="entry name" value="PRK12297.1"/>
    <property type="match status" value="1"/>
</dbReference>
<dbReference type="NCBIfam" id="NF008956">
    <property type="entry name" value="PRK12299.1"/>
    <property type="match status" value="1"/>
</dbReference>
<dbReference type="PANTHER" id="PTHR11702">
    <property type="entry name" value="DEVELOPMENTALLY REGULATED GTP-BINDING PROTEIN-RELATED"/>
    <property type="match status" value="1"/>
</dbReference>
<dbReference type="PANTHER" id="PTHR11702:SF31">
    <property type="entry name" value="MITOCHONDRIAL RIBOSOME-ASSOCIATED GTPASE 2"/>
    <property type="match status" value="1"/>
</dbReference>
<dbReference type="Pfam" id="PF01018">
    <property type="entry name" value="GTP1_OBG"/>
    <property type="match status" value="1"/>
</dbReference>
<dbReference type="Pfam" id="PF01926">
    <property type="entry name" value="MMR_HSR1"/>
    <property type="match status" value="1"/>
</dbReference>
<dbReference type="PIRSF" id="PIRSF002401">
    <property type="entry name" value="GTP_bd_Obg/CgtA"/>
    <property type="match status" value="1"/>
</dbReference>
<dbReference type="PRINTS" id="PR00326">
    <property type="entry name" value="GTP1OBG"/>
</dbReference>
<dbReference type="SUPFAM" id="SSF82051">
    <property type="entry name" value="Obg GTP-binding protein N-terminal domain"/>
    <property type="match status" value="1"/>
</dbReference>
<dbReference type="SUPFAM" id="SSF52540">
    <property type="entry name" value="P-loop containing nucleoside triphosphate hydrolases"/>
    <property type="match status" value="1"/>
</dbReference>
<dbReference type="PROSITE" id="PS51710">
    <property type="entry name" value="G_OBG"/>
    <property type="match status" value="1"/>
</dbReference>
<dbReference type="PROSITE" id="PS00905">
    <property type="entry name" value="GTP1_OBG"/>
    <property type="match status" value="1"/>
</dbReference>
<dbReference type="PROSITE" id="PS51883">
    <property type="entry name" value="OBG"/>
    <property type="match status" value="1"/>
</dbReference>
<comment type="function">
    <text evidence="1">An essential GTPase which binds GTP, GDP and possibly (p)ppGpp with moderate affinity, with high nucleotide exchange rates and a fairly low GTP hydrolysis rate. Plays a role in control of the cell cycle, stress response, ribosome biogenesis and in those bacteria that undergo differentiation, in morphogenesis control.</text>
</comment>
<comment type="cofactor">
    <cofactor evidence="1">
        <name>Mg(2+)</name>
        <dbReference type="ChEBI" id="CHEBI:18420"/>
    </cofactor>
</comment>
<comment type="subunit">
    <text evidence="1">Monomer.</text>
</comment>
<comment type="subcellular location">
    <subcellularLocation>
        <location evidence="1">Cytoplasm</location>
    </subcellularLocation>
</comment>
<comment type="similarity">
    <text evidence="1">Belongs to the TRAFAC class OBG-HflX-like GTPase superfamily. OBG GTPase family.</text>
</comment>
<gene>
    <name evidence="1" type="primary">obg</name>
    <name type="ordered locus">Plut_0165</name>
</gene>
<evidence type="ECO:0000255" key="1">
    <source>
        <dbReference type="HAMAP-Rule" id="MF_01454"/>
    </source>
</evidence>
<evidence type="ECO:0000255" key="2">
    <source>
        <dbReference type="PROSITE-ProRule" id="PRU01231"/>
    </source>
</evidence>
<evidence type="ECO:0000256" key="3">
    <source>
        <dbReference type="SAM" id="MobiDB-lite"/>
    </source>
</evidence>
<sequence>MKFVDSASIFVQAGEGGRGCVSFRREKFVPKGGPDGGDGGNGGNVWLRTNSHLTTLLDFKYRKKYLAPRGSHGQGSRKSGRKGADIYIDVPCGTLVRNAATQELLADMTGDGEEVMIARGGHGGRGNQHFATSTNQAPRRSEPGWKGEELQLDMELKLMADVGLVGFPNAGKSTLISVLSAARPKIADYPFTTLVPNLGIVRYEEYKSFVMADIPGIIEGAAEGRGLGLQFLRHIERTKILAVLVSADAEDVEAEYQTLVGELEKFGRGLDEKPRILVVTKMDIAPEDFTLPAPGDEVHVLAISSVAGMGLKELKDELWREVSMRDRPEESSDPEGEGDGGTP</sequence>